<reference key="1">
    <citation type="journal article" date="2000" name="DNA Res.">
        <title>Structural analysis of Arabidopsis thaliana chromosome 5. X. Sequence features of the regions of 3,076,755 bp covered by sixty P1 and TAC clones.</title>
        <authorList>
            <person name="Sato S."/>
            <person name="Nakamura Y."/>
            <person name="Kaneko T."/>
            <person name="Katoh T."/>
            <person name="Asamizu E."/>
            <person name="Kotani H."/>
            <person name="Tabata S."/>
        </authorList>
    </citation>
    <scope>NUCLEOTIDE SEQUENCE [LARGE SCALE GENOMIC DNA]</scope>
    <source>
        <strain>cv. Columbia</strain>
    </source>
</reference>
<reference key="2">
    <citation type="journal article" date="2017" name="Plant J.">
        <title>Araport11: a complete reannotation of the Arabidopsis thaliana reference genome.</title>
        <authorList>
            <person name="Cheng C.Y."/>
            <person name="Krishnakumar V."/>
            <person name="Chan A.P."/>
            <person name="Thibaud-Nissen F."/>
            <person name="Schobel S."/>
            <person name="Town C.D."/>
        </authorList>
    </citation>
    <scope>GENOME REANNOTATION</scope>
    <source>
        <strain>cv. Columbia</strain>
    </source>
</reference>
<reference key="3">
    <citation type="journal article" date="2004" name="Plant Cell">
        <title>Genome-wide analysis of Arabidopsis pentatricopeptide repeat proteins reveals their essential role in organelle biogenesis.</title>
        <authorList>
            <person name="Lurin C."/>
            <person name="Andres C."/>
            <person name="Aubourg S."/>
            <person name="Bellaoui M."/>
            <person name="Bitton F."/>
            <person name="Bruyere C."/>
            <person name="Caboche M."/>
            <person name="Debast C."/>
            <person name="Gualberto J."/>
            <person name="Hoffmann B."/>
            <person name="Lecharny A."/>
            <person name="Le Ret M."/>
            <person name="Martin-Magniette M.-L."/>
            <person name="Mireau H."/>
            <person name="Peeters N."/>
            <person name="Renou J.-P."/>
            <person name="Szurek B."/>
            <person name="Taconnat L."/>
            <person name="Small I."/>
        </authorList>
    </citation>
    <scope>GENE FAMILY</scope>
</reference>
<proteinExistence type="inferred from homology"/>
<comment type="similarity">
    <text evidence="1">Belongs to the PPR family. P subfamily.</text>
</comment>
<comment type="sequence caution" evidence="1">
    <conflict type="erroneous gene model prediction">
        <sequence resource="EMBL-CDS" id="AED96686"/>
    </conflict>
</comment>
<comment type="sequence caution" evidence="1">
    <conflict type="erroneous gene model prediction">
        <sequence resource="EMBL-CDS" id="BAA97283"/>
    </conflict>
</comment>
<comment type="online information" name="Pentatricopeptide repeat proteins">
    <link uri="https://ppr.plantenergy.uwa.edu.au"/>
</comment>
<organism>
    <name type="scientific">Arabidopsis thaliana</name>
    <name type="common">Mouse-ear cress</name>
    <dbReference type="NCBI Taxonomy" id="3702"/>
    <lineage>
        <taxon>Eukaryota</taxon>
        <taxon>Viridiplantae</taxon>
        <taxon>Streptophyta</taxon>
        <taxon>Embryophyta</taxon>
        <taxon>Tracheophyta</taxon>
        <taxon>Spermatophyta</taxon>
        <taxon>Magnoliopsida</taxon>
        <taxon>eudicotyledons</taxon>
        <taxon>Gunneridae</taxon>
        <taxon>Pentapetalae</taxon>
        <taxon>rosids</taxon>
        <taxon>malvids</taxon>
        <taxon>Brassicales</taxon>
        <taxon>Brassicaceae</taxon>
        <taxon>Camelineae</taxon>
        <taxon>Arabidopsis</taxon>
    </lineage>
</organism>
<sequence>MCLTKDLNLLGSYETGFDMEKSIYNILTIDRWGSLNHMDYRQARLRLVHGKLALKFLKWVVKQPGLETDHIVQLVCITTHILVRARMYDPARHILKELSLMSGKSSFVFGALMTTYRLCNSNPSVYDILIRVYLREGMIQDSLEIFRLMGLYGFNPSVYTCNAILGSVVKSGEDVSVWSFLKEMLKRKICPDVATFNILINVLCAEGSFEKSSYLMQKMEKSGYAPTIVTYNTVLHWYCKKGRFKAAIELLDHMKSKGVDADVCTYNMLIHDLCRSNRIAKGYLLLRDMRKRMIHPNEVTYNTLINGFSNEGKVLIASQLLNEMLSFGLSPNHVTFNALIDGHISEGNFKEALKMFYMMEAKGLTPSEVSYGVLLDGLCKNAEFDLARGFYMRMKRNGVCVGRITYTGMIDGLCKNGFLDEAVVLLNEMSKDGIDPDIVTYSALINGFCKVGRFKTAKEIVCRIYRVGLSPNGIIYSTLIYNCCRMGCLKEAIRIYEAMILEGHTRDHFTFNVLVTSLCKAGKVAEAEEFMRCMTSDGILPNTVSFDCLINGYGNSGEGLKAFSVFDEMTKVGHHPTFFTYGSLLKGLCKGGHLREAEKFLKSLHAVPAAVDTVMYNTLLTAMCKSGNLAKAVSLFGEMVQRSILPDSYTYTSLISGLCRKGKTVIAILFAKEAEARGNVLPNKVMYTCFVDGMFKAGQWKAGIYFREQMDNLGHTPDIVTTNAMIDGYSRMGKIEKTNDLLPEMGNQNGGPNLTTYNILLHGYSKRKDVSTSFLLYRSIILNGILPDKLTCHSLVLGICESNMLEIGLKILKAFICRGVEVDRYTFNMLISKCCANGEINWAFDLVKVMTSLGISLDKDTCDAMVSVLNRNHRFQESRMVLHEMSKQGISPESRKYIGLINGLCRVGDIKTAFVVKEEMIAHKICPPNVAESAMVRALAKCGKADEATLLLRFMLKMKLVPTIASFTTLMHLCCKNGNVIEALELRVVMSNCGLKLDLVSYNVLITGLCAKGDMALAFELYEEMKGDGFLANATTYKALIRGLLARETAFSGADIILKDLLARGFITSMSLSQDSHRNLKMAMEKLKALQSNKKD</sequence>
<accession>Q9LVQ5</accession>
<accession>F4K691</accession>
<protein>
    <recommendedName>
        <fullName>Pentatricopeptide repeat-containing protein At5g55840</fullName>
    </recommendedName>
</protein>
<evidence type="ECO:0000305" key="1"/>
<feature type="chain" id="PRO_0000363569" description="Pentatricopeptide repeat-containing protein At5g55840">
    <location>
        <begin position="1"/>
        <end position="1096"/>
    </location>
</feature>
<feature type="repeat" description="PPR 1">
    <location>
        <begin position="122"/>
        <end position="156"/>
    </location>
</feature>
<feature type="repeat" description="PPR 2">
    <location>
        <begin position="157"/>
        <end position="191"/>
    </location>
</feature>
<feature type="repeat" description="PPR 3">
    <location>
        <begin position="192"/>
        <end position="226"/>
    </location>
</feature>
<feature type="repeat" description="PPR 4">
    <location>
        <begin position="227"/>
        <end position="261"/>
    </location>
</feature>
<feature type="repeat" description="PPR 5">
    <location>
        <begin position="262"/>
        <end position="296"/>
    </location>
</feature>
<feature type="repeat" description="PPR 6">
    <location>
        <begin position="297"/>
        <end position="331"/>
    </location>
</feature>
<feature type="repeat" description="PPR 7">
    <location>
        <begin position="332"/>
        <end position="366"/>
    </location>
</feature>
<feature type="repeat" description="PPR 8">
    <location>
        <begin position="367"/>
        <end position="401"/>
    </location>
</feature>
<feature type="repeat" description="PPR 9">
    <location>
        <begin position="402"/>
        <end position="436"/>
    </location>
</feature>
<feature type="repeat" description="PPR 10">
    <location>
        <begin position="437"/>
        <end position="471"/>
    </location>
</feature>
<feature type="repeat" description="PPR 11">
    <location>
        <begin position="472"/>
        <end position="506"/>
    </location>
</feature>
<feature type="repeat" description="PPR 12">
    <location>
        <begin position="507"/>
        <end position="541"/>
    </location>
</feature>
<feature type="repeat" description="PPR 13">
    <location>
        <begin position="542"/>
        <end position="576"/>
    </location>
</feature>
<feature type="repeat" description="PPR 14">
    <location>
        <begin position="577"/>
        <end position="607"/>
    </location>
</feature>
<feature type="repeat" description="PPR 15">
    <location>
        <begin position="612"/>
        <end position="646"/>
    </location>
</feature>
<feature type="repeat" description="PPR 16">
    <location>
        <begin position="647"/>
        <end position="681"/>
    </location>
</feature>
<feature type="repeat" description="PPR 17">
    <location>
        <begin position="683"/>
        <end position="717"/>
    </location>
</feature>
<feature type="repeat" description="PPR 18">
    <location>
        <begin position="718"/>
        <end position="752"/>
    </location>
</feature>
<feature type="repeat" description="PPR 19">
    <location>
        <begin position="753"/>
        <end position="787"/>
    </location>
</feature>
<feature type="repeat" description="PPR 20">
    <location>
        <begin position="788"/>
        <end position="822"/>
    </location>
</feature>
<feature type="repeat" description="PPR 21">
    <location>
        <begin position="823"/>
        <end position="857"/>
    </location>
</feature>
<feature type="repeat" description="PPR 22">
    <location>
        <begin position="858"/>
        <end position="892"/>
    </location>
</feature>
<feature type="repeat" description="PPR 23">
    <location>
        <begin position="893"/>
        <end position="927"/>
    </location>
</feature>
<feature type="repeat" description="PPR 24">
    <location>
        <begin position="928"/>
        <end position="962"/>
    </location>
</feature>
<feature type="repeat" description="PPR 25">
    <location>
        <begin position="963"/>
        <end position="997"/>
    </location>
</feature>
<feature type="repeat" description="PPR 26">
    <location>
        <begin position="998"/>
        <end position="1032"/>
    </location>
</feature>
<feature type="repeat" description="PPR 27">
    <location>
        <begin position="1033"/>
        <end position="1068"/>
    </location>
</feature>
<gene>
    <name type="ordered locus">At5g55840</name>
    <name type="ORF">MWJ3.2</name>
</gene>
<dbReference type="EMBL" id="AB018120">
    <property type="protein sequence ID" value="BAA97283.1"/>
    <property type="status" value="ALT_SEQ"/>
    <property type="molecule type" value="Genomic_DNA"/>
</dbReference>
<dbReference type="EMBL" id="CP002688">
    <property type="protein sequence ID" value="AED96686.1"/>
    <property type="status" value="ALT_SEQ"/>
    <property type="molecule type" value="Genomic_DNA"/>
</dbReference>
<dbReference type="EMBL" id="CP002688">
    <property type="protein sequence ID" value="ANM69571.1"/>
    <property type="molecule type" value="Genomic_DNA"/>
</dbReference>
<dbReference type="RefSeq" id="NP_001331238.1">
    <property type="nucleotide sequence ID" value="NM_001345162.1"/>
</dbReference>
<dbReference type="RefSeq" id="NP_001331239.1">
    <property type="nucleotide sequence ID" value="NM_001345163.1"/>
</dbReference>
<dbReference type="RefSeq" id="NP_200395.2">
    <property type="nucleotide sequence ID" value="NM_124966.3"/>
</dbReference>
<dbReference type="SMR" id="Q9LVQ5"/>
<dbReference type="FunCoup" id="Q9LVQ5">
    <property type="interactions" value="30"/>
</dbReference>
<dbReference type="STRING" id="3702.Q9LVQ5"/>
<dbReference type="iPTMnet" id="Q9LVQ5"/>
<dbReference type="PaxDb" id="3702-AT5G55840.1"/>
<dbReference type="ProteomicsDB" id="249313"/>
<dbReference type="EnsemblPlants" id="AT5G55840.3">
    <property type="protein sequence ID" value="AT5G55840.3"/>
    <property type="gene ID" value="AT5G55840"/>
</dbReference>
<dbReference type="GeneID" id="835678"/>
<dbReference type="Gramene" id="AT5G55840.3">
    <property type="protein sequence ID" value="AT5G55840.3"/>
    <property type="gene ID" value="AT5G55840"/>
</dbReference>
<dbReference type="KEGG" id="ath:AT5G55840"/>
<dbReference type="Araport" id="AT5G55840"/>
<dbReference type="TAIR" id="AT5G55840"/>
<dbReference type="eggNOG" id="KOG4197">
    <property type="taxonomic scope" value="Eukaryota"/>
</dbReference>
<dbReference type="HOGENOM" id="CLU_002706_49_10_1"/>
<dbReference type="InParanoid" id="Q9LVQ5"/>
<dbReference type="OMA" id="YLMGFRG"/>
<dbReference type="PhylomeDB" id="Q9LVQ5"/>
<dbReference type="PRO" id="PR:Q9LVQ5"/>
<dbReference type="Proteomes" id="UP000006548">
    <property type="component" value="Chromosome 5"/>
</dbReference>
<dbReference type="ExpressionAtlas" id="Q9LVQ5">
    <property type="expression patterns" value="baseline and differential"/>
</dbReference>
<dbReference type="Gene3D" id="1.25.40.10">
    <property type="entry name" value="Tetratricopeptide repeat domain"/>
    <property type="match status" value="9"/>
</dbReference>
<dbReference type="InterPro" id="IPR002885">
    <property type="entry name" value="Pentatricopeptide_rpt"/>
</dbReference>
<dbReference type="InterPro" id="IPR050667">
    <property type="entry name" value="PPR-containing_protein"/>
</dbReference>
<dbReference type="InterPro" id="IPR033443">
    <property type="entry name" value="PROP1-like_PPR_dom"/>
</dbReference>
<dbReference type="InterPro" id="IPR011990">
    <property type="entry name" value="TPR-like_helical_dom_sf"/>
</dbReference>
<dbReference type="NCBIfam" id="TIGR00756">
    <property type="entry name" value="PPR"/>
    <property type="match status" value="22"/>
</dbReference>
<dbReference type="PANTHER" id="PTHR47939">
    <property type="entry name" value="MEMBRANE-ASSOCIATED SALT-INDUCIBLE PROTEIN-LIKE"/>
    <property type="match status" value="1"/>
</dbReference>
<dbReference type="PANTHER" id="PTHR47939:SF1">
    <property type="entry name" value="OS04G0684500 PROTEIN"/>
    <property type="match status" value="1"/>
</dbReference>
<dbReference type="Pfam" id="PF01535">
    <property type="entry name" value="PPR"/>
    <property type="match status" value="3"/>
</dbReference>
<dbReference type="Pfam" id="PF12854">
    <property type="entry name" value="PPR_1"/>
    <property type="match status" value="1"/>
</dbReference>
<dbReference type="Pfam" id="PF13041">
    <property type="entry name" value="PPR_2"/>
    <property type="match status" value="8"/>
</dbReference>
<dbReference type="Pfam" id="PF17177">
    <property type="entry name" value="PPR_long"/>
    <property type="match status" value="1"/>
</dbReference>
<dbReference type="PROSITE" id="PS51375">
    <property type="entry name" value="PPR"/>
    <property type="match status" value="27"/>
</dbReference>
<name>PP432_ARATH</name>
<keyword id="KW-1185">Reference proteome</keyword>
<keyword id="KW-0677">Repeat</keyword>